<name>YDZL_BACSU</name>
<dbReference type="EMBL" id="AL009126">
    <property type="protein sequence ID" value="CAX52552.1"/>
    <property type="molecule type" value="Genomic_DNA"/>
</dbReference>
<dbReference type="RefSeq" id="WP_010886413.1">
    <property type="nucleotide sequence ID" value="NZ_OZ025638.1"/>
</dbReference>
<dbReference type="RefSeq" id="YP_003097681.1">
    <property type="nucleotide sequence ID" value="NC_000964.3"/>
</dbReference>
<dbReference type="SMR" id="C0H3V5"/>
<dbReference type="FunCoup" id="C0H3V5">
    <property type="interactions" value="15"/>
</dbReference>
<dbReference type="STRING" id="224308.BSU04839"/>
<dbReference type="PaxDb" id="224308-BSU04839"/>
<dbReference type="EnsemblBacteria" id="CAX52552">
    <property type="protein sequence ID" value="CAX52552"/>
    <property type="gene ID" value="BSU_04839"/>
</dbReference>
<dbReference type="GeneID" id="8303154"/>
<dbReference type="KEGG" id="bsu:BSU04839"/>
<dbReference type="PATRIC" id="fig|224308.43.peg.506"/>
<dbReference type="eggNOG" id="ENOG5031UMU">
    <property type="taxonomic scope" value="Bacteria"/>
</dbReference>
<dbReference type="InParanoid" id="C0H3V5"/>
<dbReference type="OrthoDB" id="2971804at2"/>
<dbReference type="BioCyc" id="BSUB:BSU04839-MONOMER"/>
<dbReference type="Proteomes" id="UP000001570">
    <property type="component" value="Chromosome"/>
</dbReference>
<organism>
    <name type="scientific">Bacillus subtilis (strain 168)</name>
    <dbReference type="NCBI Taxonomy" id="224308"/>
    <lineage>
        <taxon>Bacteria</taxon>
        <taxon>Bacillati</taxon>
        <taxon>Bacillota</taxon>
        <taxon>Bacilli</taxon>
        <taxon>Bacillales</taxon>
        <taxon>Bacillaceae</taxon>
        <taxon>Bacillus</taxon>
    </lineage>
</organism>
<protein>
    <recommendedName>
        <fullName>Uncharacterized protein YdzL</fullName>
    </recommendedName>
</protein>
<keyword id="KW-1185">Reference proteome</keyword>
<reference key="1">
    <citation type="journal article" date="1997" name="Nature">
        <title>The complete genome sequence of the Gram-positive bacterium Bacillus subtilis.</title>
        <authorList>
            <person name="Kunst F."/>
            <person name="Ogasawara N."/>
            <person name="Moszer I."/>
            <person name="Albertini A.M."/>
            <person name="Alloni G."/>
            <person name="Azevedo V."/>
            <person name="Bertero M.G."/>
            <person name="Bessieres P."/>
            <person name="Bolotin A."/>
            <person name="Borchert S."/>
            <person name="Borriss R."/>
            <person name="Boursier L."/>
            <person name="Brans A."/>
            <person name="Braun M."/>
            <person name="Brignell S.C."/>
            <person name="Bron S."/>
            <person name="Brouillet S."/>
            <person name="Bruschi C.V."/>
            <person name="Caldwell B."/>
            <person name="Capuano V."/>
            <person name="Carter N.M."/>
            <person name="Choi S.-K."/>
            <person name="Codani J.-J."/>
            <person name="Connerton I.F."/>
            <person name="Cummings N.J."/>
            <person name="Daniel R.A."/>
            <person name="Denizot F."/>
            <person name="Devine K.M."/>
            <person name="Duesterhoeft A."/>
            <person name="Ehrlich S.D."/>
            <person name="Emmerson P.T."/>
            <person name="Entian K.-D."/>
            <person name="Errington J."/>
            <person name="Fabret C."/>
            <person name="Ferrari E."/>
            <person name="Foulger D."/>
            <person name="Fritz C."/>
            <person name="Fujita M."/>
            <person name="Fujita Y."/>
            <person name="Fuma S."/>
            <person name="Galizzi A."/>
            <person name="Galleron N."/>
            <person name="Ghim S.-Y."/>
            <person name="Glaser P."/>
            <person name="Goffeau A."/>
            <person name="Golightly E.J."/>
            <person name="Grandi G."/>
            <person name="Guiseppi G."/>
            <person name="Guy B.J."/>
            <person name="Haga K."/>
            <person name="Haiech J."/>
            <person name="Harwood C.R."/>
            <person name="Henaut A."/>
            <person name="Hilbert H."/>
            <person name="Holsappel S."/>
            <person name="Hosono S."/>
            <person name="Hullo M.-F."/>
            <person name="Itaya M."/>
            <person name="Jones L.-M."/>
            <person name="Joris B."/>
            <person name="Karamata D."/>
            <person name="Kasahara Y."/>
            <person name="Klaerr-Blanchard M."/>
            <person name="Klein C."/>
            <person name="Kobayashi Y."/>
            <person name="Koetter P."/>
            <person name="Koningstein G."/>
            <person name="Krogh S."/>
            <person name="Kumano M."/>
            <person name="Kurita K."/>
            <person name="Lapidus A."/>
            <person name="Lardinois S."/>
            <person name="Lauber J."/>
            <person name="Lazarevic V."/>
            <person name="Lee S.-M."/>
            <person name="Levine A."/>
            <person name="Liu H."/>
            <person name="Masuda S."/>
            <person name="Mauel C."/>
            <person name="Medigue C."/>
            <person name="Medina N."/>
            <person name="Mellado R.P."/>
            <person name="Mizuno M."/>
            <person name="Moestl D."/>
            <person name="Nakai S."/>
            <person name="Noback M."/>
            <person name="Noone D."/>
            <person name="O'Reilly M."/>
            <person name="Ogawa K."/>
            <person name="Ogiwara A."/>
            <person name="Oudega B."/>
            <person name="Park S.-H."/>
            <person name="Parro V."/>
            <person name="Pohl T.M."/>
            <person name="Portetelle D."/>
            <person name="Porwollik S."/>
            <person name="Prescott A.M."/>
            <person name="Presecan E."/>
            <person name="Pujic P."/>
            <person name="Purnelle B."/>
            <person name="Rapoport G."/>
            <person name="Rey M."/>
            <person name="Reynolds S."/>
            <person name="Rieger M."/>
            <person name="Rivolta C."/>
            <person name="Rocha E."/>
            <person name="Roche B."/>
            <person name="Rose M."/>
            <person name="Sadaie Y."/>
            <person name="Sato T."/>
            <person name="Scanlan E."/>
            <person name="Schleich S."/>
            <person name="Schroeter R."/>
            <person name="Scoffone F."/>
            <person name="Sekiguchi J."/>
            <person name="Sekowska A."/>
            <person name="Seror S.J."/>
            <person name="Serror P."/>
            <person name="Shin B.-S."/>
            <person name="Soldo B."/>
            <person name="Sorokin A."/>
            <person name="Tacconi E."/>
            <person name="Takagi T."/>
            <person name="Takahashi H."/>
            <person name="Takemaru K."/>
            <person name="Takeuchi M."/>
            <person name="Tamakoshi A."/>
            <person name="Tanaka T."/>
            <person name="Terpstra P."/>
            <person name="Tognoni A."/>
            <person name="Tosato V."/>
            <person name="Uchiyama S."/>
            <person name="Vandenbol M."/>
            <person name="Vannier F."/>
            <person name="Vassarotti A."/>
            <person name="Viari A."/>
            <person name="Wambutt R."/>
            <person name="Wedler E."/>
            <person name="Wedler H."/>
            <person name="Weitzenegger T."/>
            <person name="Winters P."/>
            <person name="Wipat A."/>
            <person name="Yamamoto H."/>
            <person name="Yamane K."/>
            <person name="Yasumoto K."/>
            <person name="Yata K."/>
            <person name="Yoshida K."/>
            <person name="Yoshikawa H.-F."/>
            <person name="Zumstein E."/>
            <person name="Yoshikawa H."/>
            <person name="Danchin A."/>
        </authorList>
    </citation>
    <scope>NUCLEOTIDE SEQUENCE [LARGE SCALE GENOMIC DNA]</scope>
    <source>
        <strain>168</strain>
    </source>
</reference>
<feature type="chain" id="PRO_0000380072" description="Uncharacterized protein YdzL">
    <location>
        <begin position="1"/>
        <end position="86"/>
    </location>
</feature>
<gene>
    <name type="primary">ydzL</name>
    <name type="ordered locus">BSU04839</name>
</gene>
<accession>C0H3V5</accession>
<proteinExistence type="predicted"/>
<sequence>MIFINIDITNSFMKEAVPLARQMEGDWIARMKIALNSVIINHYLNLPLTIENVNELLRKGVSYRRICKHYGIGRKDIEKLRQSSVV</sequence>